<evidence type="ECO:0000250" key="1"/>
<evidence type="ECO:0000255" key="2">
    <source>
        <dbReference type="PROSITE-ProRule" id="PRU00160"/>
    </source>
</evidence>
<evidence type="ECO:0000255" key="3">
    <source>
        <dbReference type="PROSITE-ProRule" id="PRU10044"/>
    </source>
</evidence>
<evidence type="ECO:0000305" key="4"/>
<organism>
    <name type="scientific">Dictyostelium discoideum</name>
    <name type="common">Social amoeba</name>
    <dbReference type="NCBI Taxonomy" id="44689"/>
    <lineage>
        <taxon>Eukaryota</taxon>
        <taxon>Amoebozoa</taxon>
        <taxon>Evosea</taxon>
        <taxon>Eumycetozoa</taxon>
        <taxon>Dictyostelia</taxon>
        <taxon>Dictyosteliales</taxon>
        <taxon>Dictyosteliaceae</taxon>
        <taxon>Dictyostelium</taxon>
    </lineage>
</organism>
<gene>
    <name type="ORF">DDB_G0271350</name>
</gene>
<proteinExistence type="inferred from homology"/>
<dbReference type="EC" id="3.1.3.16"/>
<dbReference type="EC" id="3.1.3.48"/>
<dbReference type="EMBL" id="AAFI02000006">
    <property type="protein sequence ID" value="EAL71805.1"/>
    <property type="molecule type" value="Genomic_DNA"/>
</dbReference>
<dbReference type="RefSeq" id="XP_645624.1">
    <property type="nucleotide sequence ID" value="XM_640532.1"/>
</dbReference>
<dbReference type="SMR" id="Q55BI8"/>
<dbReference type="FunCoup" id="Q55BI8">
    <property type="interactions" value="99"/>
</dbReference>
<dbReference type="STRING" id="44689.Q55BI8"/>
<dbReference type="PaxDb" id="44689-DDB0202886"/>
<dbReference type="EnsemblProtists" id="EAL71805">
    <property type="protein sequence ID" value="EAL71805"/>
    <property type="gene ID" value="DDB_G0271350"/>
</dbReference>
<dbReference type="GeneID" id="8617816"/>
<dbReference type="KEGG" id="ddi:DDB_G0271350"/>
<dbReference type="dictyBase" id="DDB_G0271350"/>
<dbReference type="VEuPathDB" id="AmoebaDB:DDB_G0271350"/>
<dbReference type="eggNOG" id="KOG1716">
    <property type="taxonomic scope" value="Eukaryota"/>
</dbReference>
<dbReference type="HOGENOM" id="CLU_1013464_0_0_1"/>
<dbReference type="InParanoid" id="Q55BI8"/>
<dbReference type="OMA" id="ERQHSQN"/>
<dbReference type="PhylomeDB" id="Q55BI8"/>
<dbReference type="Reactome" id="R-DDI-112409">
    <property type="pathway name" value="RAF-independent MAPK1/3 activation"/>
</dbReference>
<dbReference type="Reactome" id="R-DDI-202670">
    <property type="pathway name" value="ERKs are inactivated"/>
</dbReference>
<dbReference type="Reactome" id="R-DDI-5675221">
    <property type="pathway name" value="Negative regulation of MAPK pathway"/>
</dbReference>
<dbReference type="PRO" id="PR:Q55BI8"/>
<dbReference type="Proteomes" id="UP000002195">
    <property type="component" value="Chromosome 2"/>
</dbReference>
<dbReference type="GO" id="GO:0005737">
    <property type="term" value="C:cytoplasm"/>
    <property type="evidence" value="ECO:0000318"/>
    <property type="project" value="GO_Central"/>
</dbReference>
<dbReference type="GO" id="GO:0004721">
    <property type="term" value="F:phosphoprotein phosphatase activity"/>
    <property type="evidence" value="ECO:0000318"/>
    <property type="project" value="GO_Central"/>
</dbReference>
<dbReference type="GO" id="GO:0004722">
    <property type="term" value="F:protein serine/threonine phosphatase activity"/>
    <property type="evidence" value="ECO:0007669"/>
    <property type="project" value="UniProtKB-EC"/>
</dbReference>
<dbReference type="GO" id="GO:0004725">
    <property type="term" value="F:protein tyrosine phosphatase activity"/>
    <property type="evidence" value="ECO:0007669"/>
    <property type="project" value="UniProtKB-EC"/>
</dbReference>
<dbReference type="GO" id="GO:0043409">
    <property type="term" value="P:negative regulation of MAPK cascade"/>
    <property type="evidence" value="ECO:0000318"/>
    <property type="project" value="GO_Central"/>
</dbReference>
<dbReference type="GO" id="GO:0007165">
    <property type="term" value="P:signal transduction"/>
    <property type="evidence" value="ECO:0000318"/>
    <property type="project" value="GO_Central"/>
</dbReference>
<dbReference type="CDD" id="cd14498">
    <property type="entry name" value="DSP"/>
    <property type="match status" value="1"/>
</dbReference>
<dbReference type="FunFam" id="3.90.190.10:FF:000120">
    <property type="entry name" value="MAP kinase phosphatase, putative"/>
    <property type="match status" value="1"/>
</dbReference>
<dbReference type="Gene3D" id="3.90.190.10">
    <property type="entry name" value="Protein tyrosine phosphatase superfamily"/>
    <property type="match status" value="1"/>
</dbReference>
<dbReference type="InterPro" id="IPR000340">
    <property type="entry name" value="Dual-sp_phosphatase_cat-dom"/>
</dbReference>
<dbReference type="InterPro" id="IPR029021">
    <property type="entry name" value="Prot-tyrosine_phosphatase-like"/>
</dbReference>
<dbReference type="InterPro" id="IPR016130">
    <property type="entry name" value="Tyr_Pase_AS"/>
</dbReference>
<dbReference type="InterPro" id="IPR000387">
    <property type="entry name" value="Tyr_Pase_dom"/>
</dbReference>
<dbReference type="InterPro" id="IPR020422">
    <property type="entry name" value="TYR_PHOSPHATASE_DUAL_dom"/>
</dbReference>
<dbReference type="PANTHER" id="PTHR10159">
    <property type="entry name" value="DUAL SPECIFICITY PROTEIN PHOSPHATASE"/>
    <property type="match status" value="1"/>
</dbReference>
<dbReference type="PANTHER" id="PTHR10159:SF530">
    <property type="entry name" value="DUAL SPECIFICITY PROTEIN PHOSPHATASE DDB_G0271350-RELATED"/>
    <property type="match status" value="1"/>
</dbReference>
<dbReference type="Pfam" id="PF00782">
    <property type="entry name" value="DSPc"/>
    <property type="match status" value="1"/>
</dbReference>
<dbReference type="SMART" id="SM00195">
    <property type="entry name" value="DSPc"/>
    <property type="match status" value="1"/>
</dbReference>
<dbReference type="SUPFAM" id="SSF52799">
    <property type="entry name" value="(Phosphotyrosine protein) phosphatases II"/>
    <property type="match status" value="1"/>
</dbReference>
<dbReference type="PROSITE" id="PS00383">
    <property type="entry name" value="TYR_PHOSPHATASE_1"/>
    <property type="match status" value="1"/>
</dbReference>
<dbReference type="PROSITE" id="PS50056">
    <property type="entry name" value="TYR_PHOSPHATASE_2"/>
    <property type="match status" value="1"/>
</dbReference>
<dbReference type="PROSITE" id="PS50054">
    <property type="entry name" value="TYR_PHOSPHATASE_DUAL"/>
    <property type="match status" value="1"/>
</dbReference>
<comment type="function">
    <text evidence="1">Has a dual specificity toward Ser/Thr and Tyr-containing proteins.</text>
</comment>
<comment type="catalytic activity">
    <reaction evidence="3">
        <text>O-phospho-L-tyrosyl-[protein] + H2O = L-tyrosyl-[protein] + phosphate</text>
        <dbReference type="Rhea" id="RHEA:10684"/>
        <dbReference type="Rhea" id="RHEA-COMP:10136"/>
        <dbReference type="Rhea" id="RHEA-COMP:20101"/>
        <dbReference type="ChEBI" id="CHEBI:15377"/>
        <dbReference type="ChEBI" id="CHEBI:43474"/>
        <dbReference type="ChEBI" id="CHEBI:46858"/>
        <dbReference type="ChEBI" id="CHEBI:61978"/>
        <dbReference type="EC" id="3.1.3.48"/>
    </reaction>
</comment>
<comment type="catalytic activity">
    <reaction>
        <text>O-phospho-L-seryl-[protein] + H2O = L-seryl-[protein] + phosphate</text>
        <dbReference type="Rhea" id="RHEA:20629"/>
        <dbReference type="Rhea" id="RHEA-COMP:9863"/>
        <dbReference type="Rhea" id="RHEA-COMP:11604"/>
        <dbReference type="ChEBI" id="CHEBI:15377"/>
        <dbReference type="ChEBI" id="CHEBI:29999"/>
        <dbReference type="ChEBI" id="CHEBI:43474"/>
        <dbReference type="ChEBI" id="CHEBI:83421"/>
        <dbReference type="EC" id="3.1.3.16"/>
    </reaction>
</comment>
<comment type="catalytic activity">
    <reaction>
        <text>O-phospho-L-threonyl-[protein] + H2O = L-threonyl-[protein] + phosphate</text>
        <dbReference type="Rhea" id="RHEA:47004"/>
        <dbReference type="Rhea" id="RHEA-COMP:11060"/>
        <dbReference type="Rhea" id="RHEA-COMP:11605"/>
        <dbReference type="ChEBI" id="CHEBI:15377"/>
        <dbReference type="ChEBI" id="CHEBI:30013"/>
        <dbReference type="ChEBI" id="CHEBI:43474"/>
        <dbReference type="ChEBI" id="CHEBI:61977"/>
        <dbReference type="EC" id="3.1.3.16"/>
    </reaction>
</comment>
<comment type="similarity">
    <text evidence="4">Belongs to the protein-tyrosine phosphatase family. Non-receptor class dual specificity subfamily.</text>
</comment>
<sequence length="275" mass="32332">MGISMILDNFLYLGAAKDTKDEKEMEKLKITHIFSCAGTVHSPEKYIIANEKFEDDETVDISEQIEKAYWFIERVRMKKGARVFIHCMAGKSRSASIVLSYLLKRDIHSLSDCLFYLHSKRLEIRPNDGFMNQLCDLELKLTNKQTLSKEIKEWRSLQSKALKTKIDVQTCHFIQPSLDSTKKANEQYLLHIQSISFTFFEIHLNQDKIIQLYQQQCQLLHSNNIDIKYFTSILQEELSNSTKKAFDFLLIHYYLDWQDIINNLLNYTNLKLNLN</sequence>
<protein>
    <recommendedName>
        <fullName>Probable dual specificity protein phosphatase DDB_G0271350</fullName>
        <ecNumber>3.1.3.16</ecNumber>
        <ecNumber>3.1.3.48</ecNumber>
    </recommendedName>
</protein>
<name>DUSP3_DICDI</name>
<feature type="chain" id="PRO_0000332952" description="Probable dual specificity protein phosphatase DDB_G0271350">
    <location>
        <begin position="1"/>
        <end position="275"/>
    </location>
</feature>
<feature type="domain" description="Tyrosine-protein phosphatase" evidence="2">
    <location>
        <begin position="2"/>
        <end position="143"/>
    </location>
</feature>
<feature type="active site" description="Phosphocysteine intermediate" evidence="2">
    <location>
        <position position="87"/>
    </location>
</feature>
<reference key="1">
    <citation type="journal article" date="2002" name="Nature">
        <title>Sequence and analysis of chromosome 2 of Dictyostelium discoideum.</title>
        <authorList>
            <person name="Gloeckner G."/>
            <person name="Eichinger L."/>
            <person name="Szafranski K."/>
            <person name="Pachebat J.A."/>
            <person name="Bankier A.T."/>
            <person name="Dear P.H."/>
            <person name="Lehmann R."/>
            <person name="Baumgart C."/>
            <person name="Parra G."/>
            <person name="Abril J.F."/>
            <person name="Guigo R."/>
            <person name="Kumpf K."/>
            <person name="Tunggal B."/>
            <person name="Cox E.C."/>
            <person name="Quail M.A."/>
            <person name="Platzer M."/>
            <person name="Rosenthal A."/>
            <person name="Noegel A.A."/>
        </authorList>
    </citation>
    <scope>NUCLEOTIDE SEQUENCE [LARGE SCALE GENOMIC DNA]</scope>
    <source>
        <strain>AX4</strain>
    </source>
</reference>
<reference key="2">
    <citation type="journal article" date="2005" name="Nature">
        <title>The genome of the social amoeba Dictyostelium discoideum.</title>
        <authorList>
            <person name="Eichinger L."/>
            <person name="Pachebat J.A."/>
            <person name="Gloeckner G."/>
            <person name="Rajandream M.A."/>
            <person name="Sucgang R."/>
            <person name="Berriman M."/>
            <person name="Song J."/>
            <person name="Olsen R."/>
            <person name="Szafranski K."/>
            <person name="Xu Q."/>
            <person name="Tunggal B."/>
            <person name="Kummerfeld S."/>
            <person name="Madera M."/>
            <person name="Konfortov B.A."/>
            <person name="Rivero F."/>
            <person name="Bankier A.T."/>
            <person name="Lehmann R."/>
            <person name="Hamlin N."/>
            <person name="Davies R."/>
            <person name="Gaudet P."/>
            <person name="Fey P."/>
            <person name="Pilcher K."/>
            <person name="Chen G."/>
            <person name="Saunders D."/>
            <person name="Sodergren E.J."/>
            <person name="Davis P."/>
            <person name="Kerhornou A."/>
            <person name="Nie X."/>
            <person name="Hall N."/>
            <person name="Anjard C."/>
            <person name="Hemphill L."/>
            <person name="Bason N."/>
            <person name="Farbrother P."/>
            <person name="Desany B."/>
            <person name="Just E."/>
            <person name="Morio T."/>
            <person name="Rost R."/>
            <person name="Churcher C.M."/>
            <person name="Cooper J."/>
            <person name="Haydock S."/>
            <person name="van Driessche N."/>
            <person name="Cronin A."/>
            <person name="Goodhead I."/>
            <person name="Muzny D.M."/>
            <person name="Mourier T."/>
            <person name="Pain A."/>
            <person name="Lu M."/>
            <person name="Harper D."/>
            <person name="Lindsay R."/>
            <person name="Hauser H."/>
            <person name="James K.D."/>
            <person name="Quiles M."/>
            <person name="Madan Babu M."/>
            <person name="Saito T."/>
            <person name="Buchrieser C."/>
            <person name="Wardroper A."/>
            <person name="Felder M."/>
            <person name="Thangavelu M."/>
            <person name="Johnson D."/>
            <person name="Knights A."/>
            <person name="Loulseged H."/>
            <person name="Mungall K.L."/>
            <person name="Oliver K."/>
            <person name="Price C."/>
            <person name="Quail M.A."/>
            <person name="Urushihara H."/>
            <person name="Hernandez J."/>
            <person name="Rabbinowitsch E."/>
            <person name="Steffen D."/>
            <person name="Sanders M."/>
            <person name="Ma J."/>
            <person name="Kohara Y."/>
            <person name="Sharp S."/>
            <person name="Simmonds M.N."/>
            <person name="Spiegler S."/>
            <person name="Tivey A."/>
            <person name="Sugano S."/>
            <person name="White B."/>
            <person name="Walker D."/>
            <person name="Woodward J.R."/>
            <person name="Winckler T."/>
            <person name="Tanaka Y."/>
            <person name="Shaulsky G."/>
            <person name="Schleicher M."/>
            <person name="Weinstock G.M."/>
            <person name="Rosenthal A."/>
            <person name="Cox E.C."/>
            <person name="Chisholm R.L."/>
            <person name="Gibbs R.A."/>
            <person name="Loomis W.F."/>
            <person name="Platzer M."/>
            <person name="Kay R.R."/>
            <person name="Williams J.G."/>
            <person name="Dear P.H."/>
            <person name="Noegel A.A."/>
            <person name="Barrell B.G."/>
            <person name="Kuspa A."/>
        </authorList>
    </citation>
    <scope>NUCLEOTIDE SEQUENCE [LARGE SCALE GENOMIC DNA]</scope>
    <source>
        <strain>AX4</strain>
    </source>
</reference>
<accession>Q55BI8</accession>
<keyword id="KW-0378">Hydrolase</keyword>
<keyword id="KW-0904">Protein phosphatase</keyword>
<keyword id="KW-1185">Reference proteome</keyword>